<proteinExistence type="inferred from homology"/>
<gene>
    <name evidence="1" type="primary">xerC</name>
    <name type="ordered locus">Sca_0886</name>
</gene>
<organism>
    <name type="scientific">Staphylococcus carnosus (strain TM300)</name>
    <dbReference type="NCBI Taxonomy" id="396513"/>
    <lineage>
        <taxon>Bacteria</taxon>
        <taxon>Bacillati</taxon>
        <taxon>Bacillota</taxon>
        <taxon>Bacilli</taxon>
        <taxon>Bacillales</taxon>
        <taxon>Staphylococcaceae</taxon>
        <taxon>Staphylococcus</taxon>
    </lineage>
</organism>
<accession>B9DPG4</accession>
<evidence type="ECO:0000255" key="1">
    <source>
        <dbReference type="HAMAP-Rule" id="MF_01808"/>
    </source>
</evidence>
<evidence type="ECO:0000255" key="2">
    <source>
        <dbReference type="PROSITE-ProRule" id="PRU01246"/>
    </source>
</evidence>
<evidence type="ECO:0000255" key="3">
    <source>
        <dbReference type="PROSITE-ProRule" id="PRU01248"/>
    </source>
</evidence>
<dbReference type="EMBL" id="AM295250">
    <property type="protein sequence ID" value="CAL27796.1"/>
    <property type="molecule type" value="Genomic_DNA"/>
</dbReference>
<dbReference type="RefSeq" id="WP_015900137.1">
    <property type="nucleotide sequence ID" value="NC_012121.1"/>
</dbReference>
<dbReference type="SMR" id="B9DPG4"/>
<dbReference type="GeneID" id="93793317"/>
<dbReference type="KEGG" id="sca:SCA_0886"/>
<dbReference type="eggNOG" id="COG4974">
    <property type="taxonomic scope" value="Bacteria"/>
</dbReference>
<dbReference type="HOGENOM" id="CLU_027562_9_0_9"/>
<dbReference type="OrthoDB" id="9801717at2"/>
<dbReference type="BioCyc" id="SCAR396513:SCA_RS04475-MONOMER"/>
<dbReference type="Proteomes" id="UP000000444">
    <property type="component" value="Chromosome"/>
</dbReference>
<dbReference type="GO" id="GO:0005737">
    <property type="term" value="C:cytoplasm"/>
    <property type="evidence" value="ECO:0007669"/>
    <property type="project" value="UniProtKB-SubCell"/>
</dbReference>
<dbReference type="GO" id="GO:0003677">
    <property type="term" value="F:DNA binding"/>
    <property type="evidence" value="ECO:0007669"/>
    <property type="project" value="UniProtKB-KW"/>
</dbReference>
<dbReference type="GO" id="GO:0009037">
    <property type="term" value="F:tyrosine-based site-specific recombinase activity"/>
    <property type="evidence" value="ECO:0007669"/>
    <property type="project" value="UniProtKB-UniRule"/>
</dbReference>
<dbReference type="GO" id="GO:0051301">
    <property type="term" value="P:cell division"/>
    <property type="evidence" value="ECO:0007669"/>
    <property type="project" value="UniProtKB-KW"/>
</dbReference>
<dbReference type="GO" id="GO:0007059">
    <property type="term" value="P:chromosome segregation"/>
    <property type="evidence" value="ECO:0007669"/>
    <property type="project" value="UniProtKB-UniRule"/>
</dbReference>
<dbReference type="GO" id="GO:0006313">
    <property type="term" value="P:DNA transposition"/>
    <property type="evidence" value="ECO:0007669"/>
    <property type="project" value="UniProtKB-UniRule"/>
</dbReference>
<dbReference type="CDD" id="cd00798">
    <property type="entry name" value="INT_XerDC_C"/>
    <property type="match status" value="1"/>
</dbReference>
<dbReference type="Gene3D" id="1.10.150.130">
    <property type="match status" value="1"/>
</dbReference>
<dbReference type="Gene3D" id="1.10.443.10">
    <property type="entry name" value="Intergrase catalytic core"/>
    <property type="match status" value="1"/>
</dbReference>
<dbReference type="HAMAP" id="MF_01808">
    <property type="entry name" value="Recomb_XerC_XerD"/>
    <property type="match status" value="1"/>
</dbReference>
<dbReference type="InterPro" id="IPR044068">
    <property type="entry name" value="CB"/>
</dbReference>
<dbReference type="InterPro" id="IPR011010">
    <property type="entry name" value="DNA_brk_join_enz"/>
</dbReference>
<dbReference type="InterPro" id="IPR013762">
    <property type="entry name" value="Integrase-like_cat_sf"/>
</dbReference>
<dbReference type="InterPro" id="IPR002104">
    <property type="entry name" value="Integrase_catalytic"/>
</dbReference>
<dbReference type="InterPro" id="IPR010998">
    <property type="entry name" value="Integrase_recombinase_N"/>
</dbReference>
<dbReference type="InterPro" id="IPR004107">
    <property type="entry name" value="Integrase_SAM-like_N"/>
</dbReference>
<dbReference type="InterPro" id="IPR011931">
    <property type="entry name" value="Recomb_XerC"/>
</dbReference>
<dbReference type="InterPro" id="IPR023009">
    <property type="entry name" value="Tyrosine_recombinase_XerC/XerD"/>
</dbReference>
<dbReference type="InterPro" id="IPR050090">
    <property type="entry name" value="Tyrosine_recombinase_XerCD"/>
</dbReference>
<dbReference type="NCBIfam" id="NF001399">
    <property type="entry name" value="PRK00283.1"/>
    <property type="match status" value="1"/>
</dbReference>
<dbReference type="NCBIfam" id="NF040815">
    <property type="entry name" value="recomb_XerA_Arch"/>
    <property type="match status" value="1"/>
</dbReference>
<dbReference type="NCBIfam" id="TIGR02224">
    <property type="entry name" value="recomb_XerC"/>
    <property type="match status" value="1"/>
</dbReference>
<dbReference type="PANTHER" id="PTHR30349">
    <property type="entry name" value="PHAGE INTEGRASE-RELATED"/>
    <property type="match status" value="1"/>
</dbReference>
<dbReference type="PANTHER" id="PTHR30349:SF77">
    <property type="entry name" value="TYROSINE RECOMBINASE XERC"/>
    <property type="match status" value="1"/>
</dbReference>
<dbReference type="Pfam" id="PF02899">
    <property type="entry name" value="Phage_int_SAM_1"/>
    <property type="match status" value="1"/>
</dbReference>
<dbReference type="Pfam" id="PF00589">
    <property type="entry name" value="Phage_integrase"/>
    <property type="match status" value="1"/>
</dbReference>
<dbReference type="SUPFAM" id="SSF56349">
    <property type="entry name" value="DNA breaking-rejoining enzymes"/>
    <property type="match status" value="1"/>
</dbReference>
<dbReference type="PROSITE" id="PS51900">
    <property type="entry name" value="CB"/>
    <property type="match status" value="1"/>
</dbReference>
<dbReference type="PROSITE" id="PS51898">
    <property type="entry name" value="TYR_RECOMBINASE"/>
    <property type="match status" value="1"/>
</dbReference>
<feature type="chain" id="PRO_1000187615" description="Tyrosine recombinase XerC">
    <location>
        <begin position="1"/>
        <end position="296"/>
    </location>
</feature>
<feature type="domain" description="Core-binding (CB)" evidence="3">
    <location>
        <begin position="1"/>
        <end position="84"/>
    </location>
</feature>
<feature type="domain" description="Tyr recombinase" evidence="2">
    <location>
        <begin position="105"/>
        <end position="286"/>
    </location>
</feature>
<feature type="active site" evidence="1">
    <location>
        <position position="145"/>
    </location>
</feature>
<feature type="active site" evidence="1">
    <location>
        <position position="169"/>
    </location>
</feature>
<feature type="active site" evidence="1">
    <location>
        <position position="238"/>
    </location>
</feature>
<feature type="active site" evidence="1">
    <location>
        <position position="241"/>
    </location>
</feature>
<feature type="active site" evidence="1">
    <location>
        <position position="264"/>
    </location>
</feature>
<feature type="active site" description="O-(3'-phospho-DNA)-tyrosine intermediate" evidence="1">
    <location>
        <position position="273"/>
    </location>
</feature>
<protein>
    <recommendedName>
        <fullName evidence="1">Tyrosine recombinase XerC</fullName>
    </recommendedName>
</protein>
<keyword id="KW-0131">Cell cycle</keyword>
<keyword id="KW-0132">Cell division</keyword>
<keyword id="KW-0159">Chromosome partition</keyword>
<keyword id="KW-0963">Cytoplasm</keyword>
<keyword id="KW-0229">DNA integration</keyword>
<keyword id="KW-0233">DNA recombination</keyword>
<keyword id="KW-0238">DNA-binding</keyword>
<keyword id="KW-1185">Reference proteome</keyword>
<reference key="1">
    <citation type="journal article" date="2009" name="Appl. Environ. Microbiol.">
        <title>Genome analysis of the meat starter culture bacterium Staphylococcus carnosus TM300.</title>
        <authorList>
            <person name="Rosenstein R."/>
            <person name="Nerz C."/>
            <person name="Biswas L."/>
            <person name="Resch A."/>
            <person name="Raddatz G."/>
            <person name="Schuster S.C."/>
            <person name="Goetz F."/>
        </authorList>
    </citation>
    <scope>NUCLEOTIDE SEQUENCE [LARGE SCALE GENOMIC DNA]</scope>
    <source>
        <strain>TM300</strain>
    </source>
</reference>
<sequence>MNKIQESFLYMLKVERFFSKHTLKSYHDDLVQFNAFLEHEHLKLKSFEYKDARNYLSFLYSKGLKRTTVSRKISTLRSFYEFWMTQDDTVVNPFVQLVHPKKEQYLPHFFYEEEMSALFETVEADGHKGLRDRVILELLYGTGIRVSELVNIKLEDLDLNSPGVKVLGKGNKERFIPFGNMCRESIERYLELFPPIQNVKHDYLLVNINGRPITERGVRYVLNDIVKRTAGVTDIHPHKLRHTFATHMLNEGADLRTVQSLLGHVNLSTTGRYTHVSNQQLRKVYLNAHPRAKKEK</sequence>
<name>XERC_STACT</name>
<comment type="function">
    <text evidence="1">Site-specific tyrosine recombinase, which acts by catalyzing the cutting and rejoining of the recombining DNA molecules. The XerC-XerD complex is essential to convert dimers of the bacterial chromosome into monomers to permit their segregation at cell division. It also contributes to the segregational stability of plasmids.</text>
</comment>
<comment type="subunit">
    <text evidence="1">Forms a cyclic heterotetrameric complex composed of two molecules of XerC and two molecules of XerD.</text>
</comment>
<comment type="subcellular location">
    <subcellularLocation>
        <location evidence="1">Cytoplasm</location>
    </subcellularLocation>
</comment>
<comment type="similarity">
    <text evidence="1">Belongs to the 'phage' integrase family. XerC subfamily.</text>
</comment>